<evidence type="ECO:0000255" key="1">
    <source>
        <dbReference type="PROSITE-ProRule" id="PRU00238"/>
    </source>
</evidence>
<comment type="function">
    <text>Hemoglobin epsilon chain is a beta-type chain found in early embryos.</text>
</comment>
<comment type="tissue specificity">
    <text>Red blood cells.</text>
</comment>
<comment type="similarity">
    <text evidence="1">Belongs to the globin family.</text>
</comment>
<organism>
    <name type="scientific">Bos taurus</name>
    <name type="common">Bovine</name>
    <dbReference type="NCBI Taxonomy" id="9913"/>
    <lineage>
        <taxon>Eukaryota</taxon>
        <taxon>Metazoa</taxon>
        <taxon>Chordata</taxon>
        <taxon>Craniata</taxon>
        <taxon>Vertebrata</taxon>
        <taxon>Euteleostomi</taxon>
        <taxon>Mammalia</taxon>
        <taxon>Eutheria</taxon>
        <taxon>Laurasiatheria</taxon>
        <taxon>Artiodactyla</taxon>
        <taxon>Ruminantia</taxon>
        <taxon>Pecora</taxon>
        <taxon>Bovidae</taxon>
        <taxon>Bovinae</taxon>
        <taxon>Bos</taxon>
    </lineage>
</organism>
<gene>
    <name type="primary">HBE2</name>
</gene>
<accession>P06642</accession>
<protein>
    <recommendedName>
        <fullName>Hemoglobin subunit epsilon-2</fullName>
    </recommendedName>
    <alternativeName>
        <fullName>Epsilon-2-globin</fullName>
    </alternativeName>
    <alternativeName>
        <fullName>Hemoglobin epsilon-2 chain</fullName>
    </alternativeName>
</protein>
<feature type="chain" id="PRO_0000053182" description="Hemoglobin subunit epsilon-2">
    <location>
        <begin position="1"/>
        <end position="147"/>
    </location>
</feature>
<feature type="domain" description="Globin" evidence="1">
    <location>
        <begin position="3"/>
        <end position="147"/>
    </location>
</feature>
<feature type="binding site" description="distal binding residue" evidence="1">
    <location>
        <position position="64"/>
    </location>
    <ligand>
        <name>heme b</name>
        <dbReference type="ChEBI" id="CHEBI:60344"/>
    </ligand>
    <ligandPart>
        <name>Fe</name>
        <dbReference type="ChEBI" id="CHEBI:18248"/>
    </ligandPart>
</feature>
<feature type="binding site" description="proximal binding residue" evidence="1">
    <location>
        <position position="93"/>
    </location>
    <ligand>
        <name>heme b</name>
        <dbReference type="ChEBI" id="CHEBI:60344"/>
    </ligand>
    <ligandPart>
        <name>Fe</name>
        <dbReference type="ChEBI" id="CHEBI:18248"/>
    </ligandPart>
</feature>
<reference key="1">
    <citation type="journal article" date="1985" name="Mol. Biol. Evol.">
        <title>Concerted evolution of the cow epsilon 2 and epsilon 4 beta-globin genes.</title>
        <authorList>
            <person name="Schimenti J.C."/>
            <person name="Duncan C.H."/>
        </authorList>
    </citation>
    <scope>NUCLEOTIDE SEQUENCE [GENOMIC DNA]</scope>
</reference>
<name>HBE2_BOVIN</name>
<keyword id="KW-0349">Heme</keyword>
<keyword id="KW-0408">Iron</keyword>
<keyword id="KW-0479">Metal-binding</keyword>
<keyword id="KW-0561">Oxygen transport</keyword>
<keyword id="KW-1185">Reference proteome</keyword>
<keyword id="KW-0813">Transport</keyword>
<dbReference type="EMBL" id="X03248">
    <property type="protein sequence ID" value="CAA27007.1"/>
    <property type="molecule type" value="Genomic_DNA"/>
</dbReference>
<dbReference type="PIR" id="A25754">
    <property type="entry name" value="HEBO2"/>
</dbReference>
<dbReference type="RefSeq" id="NP_001014913.1">
    <property type="nucleotide sequence ID" value="NM_001014913.1"/>
</dbReference>
<dbReference type="SMR" id="P06642"/>
<dbReference type="FunCoup" id="P06642">
    <property type="interactions" value="14"/>
</dbReference>
<dbReference type="STRING" id="9913.ENSBTAP00000005452"/>
<dbReference type="PaxDb" id="9913-ENSBTAP00000052791"/>
<dbReference type="PeptideAtlas" id="P06642"/>
<dbReference type="GeneID" id="513240"/>
<dbReference type="KEGG" id="bta:513240"/>
<dbReference type="CTD" id="502359"/>
<dbReference type="VEuPathDB" id="HostDB:ENSBTAG00000039178"/>
<dbReference type="eggNOG" id="KOG3378">
    <property type="taxonomic scope" value="Eukaryota"/>
</dbReference>
<dbReference type="HOGENOM" id="CLU_003827_10_0_1"/>
<dbReference type="InParanoid" id="P06642"/>
<dbReference type="OMA" id="MVEWSEN"/>
<dbReference type="OrthoDB" id="9886081at2759"/>
<dbReference type="TreeFam" id="TF333268"/>
<dbReference type="Proteomes" id="UP000009136">
    <property type="component" value="Chromosome 15"/>
</dbReference>
<dbReference type="Bgee" id="ENSBTAG00000039178">
    <property type="expression patterns" value="Expressed in cumulus cell and 8 other cell types or tissues"/>
</dbReference>
<dbReference type="GO" id="GO:0031838">
    <property type="term" value="C:haptoglobin-hemoglobin complex"/>
    <property type="evidence" value="ECO:0000318"/>
    <property type="project" value="GO_Central"/>
</dbReference>
<dbReference type="GO" id="GO:0005833">
    <property type="term" value="C:hemoglobin complex"/>
    <property type="evidence" value="ECO:0000318"/>
    <property type="project" value="GO_Central"/>
</dbReference>
<dbReference type="GO" id="GO:0020037">
    <property type="term" value="F:heme binding"/>
    <property type="evidence" value="ECO:0000318"/>
    <property type="project" value="GO_Central"/>
</dbReference>
<dbReference type="GO" id="GO:0031721">
    <property type="term" value="F:hemoglobin alpha binding"/>
    <property type="evidence" value="ECO:0000318"/>
    <property type="project" value="GO_Central"/>
</dbReference>
<dbReference type="GO" id="GO:0046872">
    <property type="term" value="F:metal ion binding"/>
    <property type="evidence" value="ECO:0007669"/>
    <property type="project" value="UniProtKB-KW"/>
</dbReference>
<dbReference type="GO" id="GO:0019825">
    <property type="term" value="F:oxygen binding"/>
    <property type="evidence" value="ECO:0000318"/>
    <property type="project" value="GO_Central"/>
</dbReference>
<dbReference type="GO" id="GO:0005344">
    <property type="term" value="F:oxygen carrier activity"/>
    <property type="evidence" value="ECO:0000318"/>
    <property type="project" value="GO_Central"/>
</dbReference>
<dbReference type="GO" id="GO:0098869">
    <property type="term" value="P:cellular oxidant detoxification"/>
    <property type="evidence" value="ECO:0007669"/>
    <property type="project" value="GOC"/>
</dbReference>
<dbReference type="GO" id="GO:0042744">
    <property type="term" value="P:hydrogen peroxide catabolic process"/>
    <property type="evidence" value="ECO:0000318"/>
    <property type="project" value="GO_Central"/>
</dbReference>
<dbReference type="CDD" id="cd08925">
    <property type="entry name" value="Hb-beta-like"/>
    <property type="match status" value="1"/>
</dbReference>
<dbReference type="FunFam" id="1.10.490.10:FF:000001">
    <property type="entry name" value="Hemoglobin subunit beta"/>
    <property type="match status" value="1"/>
</dbReference>
<dbReference type="Gene3D" id="1.10.490.10">
    <property type="entry name" value="Globins"/>
    <property type="match status" value="1"/>
</dbReference>
<dbReference type="InterPro" id="IPR000971">
    <property type="entry name" value="Globin"/>
</dbReference>
<dbReference type="InterPro" id="IPR009050">
    <property type="entry name" value="Globin-like_sf"/>
</dbReference>
<dbReference type="InterPro" id="IPR012292">
    <property type="entry name" value="Globin/Proto"/>
</dbReference>
<dbReference type="InterPro" id="IPR002337">
    <property type="entry name" value="Hemoglobin_b"/>
</dbReference>
<dbReference type="InterPro" id="IPR050056">
    <property type="entry name" value="Hemoglobin_oxygen_transport"/>
</dbReference>
<dbReference type="PANTHER" id="PTHR11442">
    <property type="entry name" value="HEMOGLOBIN FAMILY MEMBER"/>
    <property type="match status" value="1"/>
</dbReference>
<dbReference type="PANTHER" id="PTHR11442:SF35">
    <property type="entry name" value="HEMOGLOBIN SUBUNIT EPSILON-2"/>
    <property type="match status" value="1"/>
</dbReference>
<dbReference type="Pfam" id="PF00042">
    <property type="entry name" value="Globin"/>
    <property type="match status" value="1"/>
</dbReference>
<dbReference type="PRINTS" id="PR00814">
    <property type="entry name" value="BETAHAEM"/>
</dbReference>
<dbReference type="SUPFAM" id="SSF46458">
    <property type="entry name" value="Globin-like"/>
    <property type="match status" value="1"/>
</dbReference>
<dbReference type="PROSITE" id="PS01033">
    <property type="entry name" value="GLOBIN"/>
    <property type="match status" value="1"/>
</dbReference>
<proteinExistence type="evidence at transcript level"/>
<sequence length="147" mass="16535">MVHFTTEENVAVASLWAKVNVEVVGGESLARLLIVCPWTQRFFDSFGNLYSESAIMGNPKVKVYGRKVLNSFGNAIKHMDDLKGTFADLSELHCDKLHVDPENFRLLGNMILIVLATHFSKEFTPQMQAAWQKLTNAVANALTHKYH</sequence>